<organism>
    <name type="scientific">Citrobacter koseri (strain ATCC BAA-895 / CDC 4225-83 / SGSC4696)</name>
    <dbReference type="NCBI Taxonomy" id="290338"/>
    <lineage>
        <taxon>Bacteria</taxon>
        <taxon>Pseudomonadati</taxon>
        <taxon>Pseudomonadota</taxon>
        <taxon>Gammaproteobacteria</taxon>
        <taxon>Enterobacterales</taxon>
        <taxon>Enterobacteriaceae</taxon>
        <taxon>Citrobacter</taxon>
    </lineage>
</organism>
<proteinExistence type="inferred from homology"/>
<evidence type="ECO:0000255" key="1">
    <source>
        <dbReference type="HAMAP-Rule" id="MF_01380"/>
    </source>
</evidence>
<reference key="1">
    <citation type="submission" date="2007-08" db="EMBL/GenBank/DDBJ databases">
        <authorList>
            <consortium name="The Citrobacter koseri Genome Sequencing Project"/>
            <person name="McClelland M."/>
            <person name="Sanderson E.K."/>
            <person name="Porwollik S."/>
            <person name="Spieth J."/>
            <person name="Clifton W.S."/>
            <person name="Latreille P."/>
            <person name="Courtney L."/>
            <person name="Wang C."/>
            <person name="Pepin K."/>
            <person name="Bhonagiri V."/>
            <person name="Nash W."/>
            <person name="Johnson M."/>
            <person name="Thiruvilangam P."/>
            <person name="Wilson R."/>
        </authorList>
    </citation>
    <scope>NUCLEOTIDE SEQUENCE [LARGE SCALE GENOMIC DNA]</scope>
    <source>
        <strain>ATCC BAA-895 / CDC 4225-83 / SGSC4696</strain>
    </source>
</reference>
<dbReference type="EMBL" id="CP000822">
    <property type="protein sequence ID" value="ABV14295.1"/>
    <property type="molecule type" value="Genomic_DNA"/>
</dbReference>
<dbReference type="RefSeq" id="WP_012134001.1">
    <property type="nucleotide sequence ID" value="NC_009792.1"/>
</dbReference>
<dbReference type="SMR" id="A8ALD2"/>
<dbReference type="STRING" id="290338.CKO_03211"/>
<dbReference type="GeneID" id="45136993"/>
<dbReference type="KEGG" id="cko:CKO_03211"/>
<dbReference type="HOGENOM" id="CLU_069054_5_3_6"/>
<dbReference type="OrthoDB" id="9801228at2"/>
<dbReference type="Proteomes" id="UP000008148">
    <property type="component" value="Chromosome"/>
</dbReference>
<dbReference type="GO" id="GO:0005829">
    <property type="term" value="C:cytosol"/>
    <property type="evidence" value="ECO:0007669"/>
    <property type="project" value="TreeGrafter"/>
</dbReference>
<dbReference type="GO" id="GO:0051537">
    <property type="term" value="F:2 iron, 2 sulfur cluster binding"/>
    <property type="evidence" value="ECO:0007669"/>
    <property type="project" value="TreeGrafter"/>
</dbReference>
<dbReference type="GO" id="GO:0051539">
    <property type="term" value="F:4 iron, 4 sulfur cluster binding"/>
    <property type="evidence" value="ECO:0007669"/>
    <property type="project" value="TreeGrafter"/>
</dbReference>
<dbReference type="GO" id="GO:0005506">
    <property type="term" value="F:iron ion binding"/>
    <property type="evidence" value="ECO:0007669"/>
    <property type="project" value="UniProtKB-UniRule"/>
</dbReference>
<dbReference type="GO" id="GO:0016226">
    <property type="term" value="P:iron-sulfur cluster assembly"/>
    <property type="evidence" value="ECO:0007669"/>
    <property type="project" value="UniProtKB-UniRule"/>
</dbReference>
<dbReference type="FunFam" id="2.60.300.12:FF:000002">
    <property type="entry name" value="Iron-sulfur cluster insertion protein ErpA"/>
    <property type="match status" value="1"/>
</dbReference>
<dbReference type="Gene3D" id="2.60.300.12">
    <property type="entry name" value="HesB-like domain"/>
    <property type="match status" value="1"/>
</dbReference>
<dbReference type="HAMAP" id="MF_01380">
    <property type="entry name" value="Fe_S_insert_ErpA"/>
    <property type="match status" value="1"/>
</dbReference>
<dbReference type="InterPro" id="IPR000361">
    <property type="entry name" value="FeS_biogenesis"/>
</dbReference>
<dbReference type="InterPro" id="IPR016092">
    <property type="entry name" value="FeS_cluster_insertion"/>
</dbReference>
<dbReference type="InterPro" id="IPR017870">
    <property type="entry name" value="FeS_cluster_insertion_CS"/>
</dbReference>
<dbReference type="InterPro" id="IPR023063">
    <property type="entry name" value="FeS_cluster_insertion_RrpA"/>
</dbReference>
<dbReference type="InterPro" id="IPR035903">
    <property type="entry name" value="HesB-like_dom_sf"/>
</dbReference>
<dbReference type="NCBIfam" id="TIGR00049">
    <property type="entry name" value="iron-sulfur cluster assembly accessory protein"/>
    <property type="match status" value="1"/>
</dbReference>
<dbReference type="NCBIfam" id="NF010147">
    <property type="entry name" value="PRK13623.1"/>
    <property type="match status" value="1"/>
</dbReference>
<dbReference type="PANTHER" id="PTHR43011">
    <property type="entry name" value="IRON-SULFUR CLUSTER ASSEMBLY 2 HOMOLOG, MITOCHONDRIAL"/>
    <property type="match status" value="1"/>
</dbReference>
<dbReference type="PANTHER" id="PTHR43011:SF1">
    <property type="entry name" value="IRON-SULFUR CLUSTER ASSEMBLY 2 HOMOLOG, MITOCHONDRIAL"/>
    <property type="match status" value="1"/>
</dbReference>
<dbReference type="Pfam" id="PF01521">
    <property type="entry name" value="Fe-S_biosyn"/>
    <property type="match status" value="1"/>
</dbReference>
<dbReference type="SUPFAM" id="SSF89360">
    <property type="entry name" value="HesB-like domain"/>
    <property type="match status" value="1"/>
</dbReference>
<dbReference type="PROSITE" id="PS01152">
    <property type="entry name" value="HESB"/>
    <property type="match status" value="1"/>
</dbReference>
<feature type="chain" id="PRO_1000144903" description="Iron-sulfur cluster insertion protein ErpA">
    <location>
        <begin position="1"/>
        <end position="114"/>
    </location>
</feature>
<feature type="binding site" evidence="1">
    <location>
        <position position="42"/>
    </location>
    <ligand>
        <name>iron-sulfur cluster</name>
        <dbReference type="ChEBI" id="CHEBI:30408"/>
    </ligand>
</feature>
<feature type="binding site" evidence="1">
    <location>
        <position position="106"/>
    </location>
    <ligand>
        <name>iron-sulfur cluster</name>
        <dbReference type="ChEBI" id="CHEBI:30408"/>
    </ligand>
</feature>
<feature type="binding site" evidence="1">
    <location>
        <position position="108"/>
    </location>
    <ligand>
        <name>iron-sulfur cluster</name>
        <dbReference type="ChEBI" id="CHEBI:30408"/>
    </ligand>
</feature>
<name>ERPA_CITK8</name>
<accession>A8ALD2</accession>
<protein>
    <recommendedName>
        <fullName evidence="1">Iron-sulfur cluster insertion protein ErpA</fullName>
    </recommendedName>
</protein>
<gene>
    <name evidence="1" type="primary">erpA</name>
    <name type="ordered locus">CKO_03211</name>
</gene>
<sequence length="114" mass="12098">MSDDVALPLQFTEAAAKKVKSLIADEDNPNLKLRVYITGGGCSGFQYGFTFDDQVNEGDMTIEKQGVGLVVDPMSLQYLVGGAVDYTEGLEGSRFVVTNPNAKSTCGCGSSFSI</sequence>
<comment type="function">
    <text evidence="1">Required for insertion of 4Fe-4S clusters for at least IspG.</text>
</comment>
<comment type="cofactor">
    <cofactor evidence="1">
        <name>iron-sulfur cluster</name>
        <dbReference type="ChEBI" id="CHEBI:30408"/>
    </cofactor>
    <text evidence="1">Binds 1 iron-sulfur cluster per subunit.</text>
</comment>
<comment type="subunit">
    <text evidence="1">Homodimer.</text>
</comment>
<comment type="similarity">
    <text evidence="1">Belongs to the HesB/IscA family.</text>
</comment>
<keyword id="KW-0408">Iron</keyword>
<keyword id="KW-0411">Iron-sulfur</keyword>
<keyword id="KW-0479">Metal-binding</keyword>
<keyword id="KW-1185">Reference proteome</keyword>